<name>PB2_I57A0</name>
<evidence type="ECO:0000255" key="1">
    <source>
        <dbReference type="HAMAP-Rule" id="MF_04062"/>
    </source>
</evidence>
<comment type="function">
    <text evidence="1">Plays an essential role in transcription initiation and cap-stealing mechanism, in which cellular capped pre-mRNAs are used to generate primers for viral transcription. Recognizes and binds the 7-methylguanosine-containing cap of the target pre-RNA which is subsequently cleaved after 10-13 nucleotides by the viral protein PA. Plays a role in the initiation of the viral genome replication and modulates the activity of the ribonucleoprotein (RNP) complex. In addition, participates in the inhibition of type I interferon induction through interaction with and inhibition of the host mitochondrial antiviral signaling protein MAVS.</text>
</comment>
<comment type="subunit">
    <text evidence="1">Influenza RNA polymerase is composed of three subunits: PB1, PB2 and PA. Interacts (via N-terminus) with PB1 (via C-terminus). Interacts with nucleoprotein NP (via N-terminus). Interacts (via N-terminus) with host MAVS (via N-terminus); this interaction inhibits host innate immune response.</text>
</comment>
<comment type="subcellular location">
    <subcellularLocation>
        <location evidence="1">Virion</location>
    </subcellularLocation>
    <subcellularLocation>
        <location evidence="1">Host nucleus</location>
    </subcellularLocation>
    <subcellularLocation>
        <location evidence="1">Host mitochondrion</location>
    </subcellularLocation>
</comment>
<comment type="similarity">
    <text evidence="1">Belongs to the influenza viruses PB2 family.</text>
</comment>
<organismHost>
    <name type="scientific">Aves</name>
    <dbReference type="NCBI Taxonomy" id="8782"/>
</organismHost>
<organismHost>
    <name type="scientific">Homo sapiens</name>
    <name type="common">Human</name>
    <dbReference type="NCBI Taxonomy" id="9606"/>
</organismHost>
<accession>Q1K9Q6</accession>
<dbReference type="EMBL" id="DQ508838">
    <property type="protein sequence ID" value="ABF21228.1"/>
    <property type="molecule type" value="Genomic_RNA"/>
</dbReference>
<dbReference type="SMR" id="Q1K9Q6"/>
<dbReference type="Proteomes" id="UP000118104">
    <property type="component" value="Genome"/>
</dbReference>
<dbReference type="GO" id="GO:0033650">
    <property type="term" value="C:host cell mitochondrion"/>
    <property type="evidence" value="ECO:0007669"/>
    <property type="project" value="UniProtKB-SubCell"/>
</dbReference>
<dbReference type="GO" id="GO:0042025">
    <property type="term" value="C:host cell nucleus"/>
    <property type="evidence" value="ECO:0007669"/>
    <property type="project" value="UniProtKB-SubCell"/>
</dbReference>
<dbReference type="GO" id="GO:0044423">
    <property type="term" value="C:virion component"/>
    <property type="evidence" value="ECO:0007669"/>
    <property type="project" value="UniProtKB-UniRule"/>
</dbReference>
<dbReference type="GO" id="GO:0003723">
    <property type="term" value="F:RNA binding"/>
    <property type="evidence" value="ECO:0007669"/>
    <property type="project" value="UniProtKB-UniRule"/>
</dbReference>
<dbReference type="GO" id="GO:0003968">
    <property type="term" value="F:RNA-directed RNA polymerase activity"/>
    <property type="evidence" value="ECO:0007669"/>
    <property type="project" value="UniProtKB-UniRule"/>
</dbReference>
<dbReference type="GO" id="GO:0006370">
    <property type="term" value="P:7-methylguanosine mRNA capping"/>
    <property type="evidence" value="ECO:0007669"/>
    <property type="project" value="UniProtKB-UniRule"/>
</dbReference>
<dbReference type="GO" id="GO:0075526">
    <property type="term" value="P:cap snatching"/>
    <property type="evidence" value="ECO:0007669"/>
    <property type="project" value="UniProtKB-UniRule"/>
</dbReference>
<dbReference type="GO" id="GO:0006351">
    <property type="term" value="P:DNA-templated transcription"/>
    <property type="evidence" value="ECO:0007669"/>
    <property type="project" value="UniProtKB-UniRule"/>
</dbReference>
<dbReference type="GO" id="GO:0039545">
    <property type="term" value="P:symbiont-mediated suppression of host cytoplasmic pattern recognition receptor signaling pathway via inhibition of MAVS activity"/>
    <property type="evidence" value="ECO:0007669"/>
    <property type="project" value="UniProtKB-UniRule"/>
</dbReference>
<dbReference type="GO" id="GO:0039657">
    <property type="term" value="P:symbiont-mediated suppression of host gene expression"/>
    <property type="evidence" value="ECO:0007669"/>
    <property type="project" value="UniProtKB-KW"/>
</dbReference>
<dbReference type="GO" id="GO:0039523">
    <property type="term" value="P:symbiont-mediated suppression of host mRNA transcription via inhibition of RNA polymerase II activity"/>
    <property type="evidence" value="ECO:0007669"/>
    <property type="project" value="UniProtKB-UniRule"/>
</dbReference>
<dbReference type="GO" id="GO:0039694">
    <property type="term" value="P:viral RNA genome replication"/>
    <property type="evidence" value="ECO:0007669"/>
    <property type="project" value="InterPro"/>
</dbReference>
<dbReference type="FunFam" id="3.30.30.90:FF:000001">
    <property type="entry name" value="Polymerase basic protein 2"/>
    <property type="match status" value="1"/>
</dbReference>
<dbReference type="Gene3D" id="3.30.30.90">
    <property type="entry name" value="Polymerase Basic Protein 2, C-terminal domain"/>
    <property type="match status" value="1"/>
</dbReference>
<dbReference type="HAMAP" id="MF_04062">
    <property type="entry name" value="INV_PB2"/>
    <property type="match status" value="1"/>
</dbReference>
<dbReference type="InterPro" id="IPR049110">
    <property type="entry name" value="Flu_PB2_2nd"/>
</dbReference>
<dbReference type="InterPro" id="IPR049114">
    <property type="entry name" value="Flu_PB2_6th"/>
</dbReference>
<dbReference type="InterPro" id="IPR049115">
    <property type="entry name" value="Flu_PB2_C"/>
</dbReference>
<dbReference type="InterPro" id="IPR048298">
    <property type="entry name" value="Flu_PB2_CAP-bd"/>
</dbReference>
<dbReference type="InterPro" id="IPR049111">
    <property type="entry name" value="Flu_PB2_middle"/>
</dbReference>
<dbReference type="InterPro" id="IPR049106">
    <property type="entry name" value="Flu_PB2_N"/>
</dbReference>
<dbReference type="InterPro" id="IPR001591">
    <property type="entry name" value="INV_PB2"/>
</dbReference>
<dbReference type="InterPro" id="IPR049113">
    <property type="entry name" value="PB2_helical"/>
</dbReference>
<dbReference type="InterPro" id="IPR037258">
    <property type="entry name" value="PDB2_C"/>
</dbReference>
<dbReference type="Pfam" id="PF20947">
    <property type="entry name" value="Flu_PB2_1st"/>
    <property type="match status" value="1"/>
</dbReference>
<dbReference type="Pfam" id="PF20948">
    <property type="entry name" value="Flu_PB2_2nd"/>
    <property type="match status" value="1"/>
</dbReference>
<dbReference type="Pfam" id="PF20949">
    <property type="entry name" value="Flu_PB2_3rd"/>
    <property type="match status" value="1"/>
</dbReference>
<dbReference type="Pfam" id="PF20950">
    <property type="entry name" value="Flu_PB2_4th"/>
    <property type="match status" value="1"/>
</dbReference>
<dbReference type="Pfam" id="PF00604">
    <property type="entry name" value="Flu_PB2_5th"/>
    <property type="match status" value="1"/>
</dbReference>
<dbReference type="Pfam" id="PF20951">
    <property type="entry name" value="Flu_PB2_6th"/>
    <property type="match status" value="1"/>
</dbReference>
<dbReference type="Pfam" id="PF20952">
    <property type="entry name" value="Flu_PB2_7th"/>
    <property type="match status" value="1"/>
</dbReference>
<dbReference type="SUPFAM" id="SSF160453">
    <property type="entry name" value="PB2 C-terminal domain-like"/>
    <property type="match status" value="1"/>
</dbReference>
<proteinExistence type="inferred from homology"/>
<feature type="chain" id="PRO_0000279636" description="Polymerase basic protein 2">
    <location>
        <begin position="1"/>
        <end position="759"/>
    </location>
</feature>
<feature type="short sequence motif" description="Nuclear localization signal" evidence="1">
    <location>
        <begin position="736"/>
        <end position="739"/>
    </location>
</feature>
<feature type="site" description="Mammalian adaptation" evidence="1">
    <location>
        <position position="627"/>
    </location>
</feature>
<organism>
    <name type="scientific">Influenza A virus (strain A/Japan/305/1957 H2N2)</name>
    <dbReference type="NCBI Taxonomy" id="387161"/>
    <lineage>
        <taxon>Viruses</taxon>
        <taxon>Riboviria</taxon>
        <taxon>Orthornavirae</taxon>
        <taxon>Negarnaviricota</taxon>
        <taxon>Polyploviricotina</taxon>
        <taxon>Insthoviricetes</taxon>
        <taxon>Articulavirales</taxon>
        <taxon>Orthomyxoviridae</taxon>
        <taxon>Alphainfluenzavirus</taxon>
        <taxon>Alphainfluenzavirus influenzae</taxon>
        <taxon>Influenza A virus</taxon>
    </lineage>
</organism>
<gene>
    <name evidence="1" type="primary">PB2</name>
</gene>
<keyword id="KW-1157">Cap snatching</keyword>
<keyword id="KW-1262">Eukaryotic host gene expression shutoff by virus</keyword>
<keyword id="KW-1191">Eukaryotic host transcription shutoff by virus</keyword>
<keyword id="KW-1190">Host gene expression shutoff by virus</keyword>
<keyword id="KW-1045">Host mitochondrion</keyword>
<keyword id="KW-1048">Host nucleus</keyword>
<keyword id="KW-0945">Host-virus interaction</keyword>
<keyword id="KW-1090">Inhibition of host innate immune response by virus</keyword>
<keyword id="KW-1097">Inhibition of host MAVS by virus</keyword>
<keyword id="KW-1113">Inhibition of host RLR pathway by virus</keyword>
<keyword id="KW-1104">Inhibition of host RNA polymerase II by virus</keyword>
<keyword id="KW-0506">mRNA capping</keyword>
<keyword id="KW-0507">mRNA processing</keyword>
<keyword id="KW-0899">Viral immunoevasion</keyword>
<keyword id="KW-1195">Viral transcription</keyword>
<keyword id="KW-0946">Virion</keyword>
<sequence>MERIKELRNLMSQSRTREILTKTTVDHMAIIKKYTSGRQEKNPSLRMKWMMAMKYPITADKRITEMIPERNEQGQTLWSKMSDAGSDRVMVSPLAVTWWNRNGPMTSTVHYPKIYKTYFEKVERLKHGTFGPVHFRNQVKIRRRVDINPGHADLSAKEAQDVIMEVVFPNEVGARILTSESQLTITKEKKEELQDCKISPLMVAYMLERELVRKTRFLPVAGGTSSVYIEVLHLTQGTCWEQMYTPGGEVRNDDVDQSLIIAARNIVRRAAVSADPLASLLEMCHSTQIGGTRMVDILRQNPTEEQAVDICKAAMGLRISSSFSFGGFTFKRTSGSSVKREEEVLTGNLQTLKIRVHEGYEEFTMVGKRATAILRKTTRRLIQLIVSGRDEQSIAEAIIVAMVFSQEDCMIKAVRGDLNFVNRANQRLNPMHQLLRHFQKDAKVLFQNWGIEHIDNVMGMIGVLPDMTPSTEMSMRGVRVSKMGVDEYSSAERVVVSIDRFLRVRDQRGNVLLSPEEVSETQGTEKLTITYSSSMMWEINGPESVLVNTYQWIIRNWETVKIQWSQNPTMLYNKMEFEPFQSLVPKAIRGQYSGFVRTLFQQMRDVLGTFDTTQIIKLLPFAAAPPKQSRMQFSSLTVNVRGSGMRILVRGNSPVFNYNKTTKRLTILGKDAGTLTEDPDEGTSGVESAVLRGFLILGKEDRRYGPALSINELSNLAKGEKANVLIGQGDVVLVMKRKRDSSILTDSQTATKRIRMAIN</sequence>
<reference key="1">
    <citation type="submission" date="2006-04" db="EMBL/GenBank/DDBJ databases">
        <title>Complete genome sequencing and analysis of selected influenza virus vaccine strains spanning six decades (1933-1999).</title>
        <authorList>
            <person name="Mbawuike I.N."/>
            <person name="Zhang Y."/>
            <person name="Yamada R.E."/>
            <person name="Nino D."/>
            <person name="Bui H.-H."/>
            <person name="Sette A."/>
            <person name="Couch R.B."/>
        </authorList>
    </citation>
    <scope>NUCLEOTIDE SEQUENCE [GENOMIC RNA]</scope>
</reference>
<protein>
    <recommendedName>
        <fullName evidence="1">Polymerase basic protein 2</fullName>
    </recommendedName>
    <alternativeName>
        <fullName evidence="1">RNA-directed RNA polymerase subunit P3</fullName>
    </alternativeName>
</protein>